<protein>
    <recommendedName>
        <fullName evidence="1">Putative septation protein SpoVG</fullName>
    </recommendedName>
</protein>
<name>SP5G_GEOTN</name>
<keyword id="KW-0131">Cell cycle</keyword>
<keyword id="KW-0132">Cell division</keyword>
<keyword id="KW-0717">Septation</keyword>
<gene>
    <name evidence="1" type="primary">spoVG</name>
    <name type="ordered locus">GTNG_0042</name>
</gene>
<reference key="1">
    <citation type="journal article" date="2007" name="Proc. Natl. Acad. Sci. U.S.A.">
        <title>Genome and proteome of long-chain alkane degrading Geobacillus thermodenitrificans NG80-2 isolated from a deep-subsurface oil reservoir.</title>
        <authorList>
            <person name="Feng L."/>
            <person name="Wang W."/>
            <person name="Cheng J."/>
            <person name="Ren Y."/>
            <person name="Zhao G."/>
            <person name="Gao C."/>
            <person name="Tang Y."/>
            <person name="Liu X."/>
            <person name="Han W."/>
            <person name="Peng X."/>
            <person name="Liu R."/>
            <person name="Wang L."/>
        </authorList>
    </citation>
    <scope>NUCLEOTIDE SEQUENCE [LARGE SCALE GENOMIC DNA]</scope>
    <source>
        <strain>NG80-2</strain>
    </source>
</reference>
<comment type="function">
    <text evidence="1">Could be involved in septation.</text>
</comment>
<comment type="similarity">
    <text evidence="1">Belongs to the SpoVG family.</text>
</comment>
<proteinExistence type="inferred from homology"/>
<evidence type="ECO:0000255" key="1">
    <source>
        <dbReference type="HAMAP-Rule" id="MF_00819"/>
    </source>
</evidence>
<organism>
    <name type="scientific">Geobacillus thermodenitrificans (strain NG80-2)</name>
    <dbReference type="NCBI Taxonomy" id="420246"/>
    <lineage>
        <taxon>Bacteria</taxon>
        <taxon>Bacillati</taxon>
        <taxon>Bacillota</taxon>
        <taxon>Bacilli</taxon>
        <taxon>Bacillales</taxon>
        <taxon>Anoxybacillaceae</taxon>
        <taxon>Geobacillus</taxon>
    </lineage>
</organism>
<dbReference type="EMBL" id="CP000557">
    <property type="protein sequence ID" value="ABO65429.1"/>
    <property type="molecule type" value="Genomic_DNA"/>
</dbReference>
<dbReference type="RefSeq" id="WP_003247437.1">
    <property type="nucleotide sequence ID" value="NC_009328.1"/>
</dbReference>
<dbReference type="SMR" id="A4IJC5"/>
<dbReference type="GeneID" id="94898348"/>
<dbReference type="KEGG" id="gtn:GTNG_0042"/>
<dbReference type="eggNOG" id="COG2088">
    <property type="taxonomic scope" value="Bacteria"/>
</dbReference>
<dbReference type="HOGENOM" id="CLU_103669_2_1_9"/>
<dbReference type="Proteomes" id="UP000001578">
    <property type="component" value="Chromosome"/>
</dbReference>
<dbReference type="GO" id="GO:0000917">
    <property type="term" value="P:division septum assembly"/>
    <property type="evidence" value="ECO:0007669"/>
    <property type="project" value="UniProtKB-KW"/>
</dbReference>
<dbReference type="GO" id="GO:0030435">
    <property type="term" value="P:sporulation resulting in formation of a cellular spore"/>
    <property type="evidence" value="ECO:0007669"/>
    <property type="project" value="InterPro"/>
</dbReference>
<dbReference type="FunFam" id="3.30.1120.40:FF:000001">
    <property type="entry name" value="Putative septation protein SpoVG"/>
    <property type="match status" value="1"/>
</dbReference>
<dbReference type="Gene3D" id="3.30.1120.40">
    <property type="entry name" value="Stage V sporulation protein G"/>
    <property type="match status" value="1"/>
</dbReference>
<dbReference type="HAMAP" id="MF_00819">
    <property type="entry name" value="SpoVG"/>
    <property type="match status" value="1"/>
</dbReference>
<dbReference type="InterPro" id="IPR007170">
    <property type="entry name" value="SpoVG"/>
</dbReference>
<dbReference type="InterPro" id="IPR036751">
    <property type="entry name" value="SpoVG_sf"/>
</dbReference>
<dbReference type="NCBIfam" id="NF009749">
    <property type="entry name" value="PRK13259.1"/>
    <property type="match status" value="1"/>
</dbReference>
<dbReference type="PANTHER" id="PTHR38429">
    <property type="entry name" value="SEPTATION PROTEIN SPOVG-RELATED"/>
    <property type="match status" value="1"/>
</dbReference>
<dbReference type="PANTHER" id="PTHR38429:SF1">
    <property type="entry name" value="SEPTATION PROTEIN SPOVG-RELATED"/>
    <property type="match status" value="1"/>
</dbReference>
<dbReference type="Pfam" id="PF04026">
    <property type="entry name" value="SpoVG"/>
    <property type="match status" value="1"/>
</dbReference>
<dbReference type="SUPFAM" id="SSF160537">
    <property type="entry name" value="SpoVG-like"/>
    <property type="match status" value="1"/>
</dbReference>
<accession>A4IJC5</accession>
<feature type="chain" id="PRO_1000062433" description="Putative septation protein SpoVG">
    <location>
        <begin position="1"/>
        <end position="96"/>
    </location>
</feature>
<sequence length="96" mass="10731">MEVTDVRLRRVNTEGRMKAIASITLDNEFVVHDIRVIDGNNGLFVAMPSKRTPDGEFRDIAHPINSATRGKIQEAILAEYHRLGKLEEELEEAGAS</sequence>